<evidence type="ECO:0000255" key="1">
    <source>
        <dbReference type="HAMAP-Rule" id="MF_01302"/>
    </source>
</evidence>
<evidence type="ECO:0000305" key="2"/>
<reference key="1">
    <citation type="journal article" date="2006" name="Environ. Microbiol.">
        <title>Whole genome analysis of the marine Bacteroidetes'Gramella forsetii' reveals adaptations to degradation of polymeric organic matter.</title>
        <authorList>
            <person name="Bauer M."/>
            <person name="Kube M."/>
            <person name="Teeling H."/>
            <person name="Richter M."/>
            <person name="Lombardot T."/>
            <person name="Allers E."/>
            <person name="Wuerdemann C.A."/>
            <person name="Quast C."/>
            <person name="Kuhl H."/>
            <person name="Knaust F."/>
            <person name="Woebken D."/>
            <person name="Bischof K."/>
            <person name="Mussmann M."/>
            <person name="Choudhuri J.V."/>
            <person name="Meyer F."/>
            <person name="Reinhardt R."/>
            <person name="Amann R.I."/>
            <person name="Gloeckner F.O."/>
        </authorList>
    </citation>
    <scope>NUCLEOTIDE SEQUENCE [LARGE SCALE GENOMIC DNA]</scope>
    <source>
        <strain>DSM 17595 / CGMCC 1.15422 / KT0803</strain>
    </source>
</reference>
<dbReference type="EMBL" id="CU207366">
    <property type="protein sequence ID" value="CAL67779.1"/>
    <property type="molecule type" value="Genomic_DNA"/>
</dbReference>
<dbReference type="RefSeq" id="WP_011710682.1">
    <property type="nucleotide sequence ID" value="NC_008571.1"/>
</dbReference>
<dbReference type="SMR" id="A0M584"/>
<dbReference type="STRING" id="411154.GFO_2825"/>
<dbReference type="KEGG" id="gfo:GFO_2825"/>
<dbReference type="eggNOG" id="COG0096">
    <property type="taxonomic scope" value="Bacteria"/>
</dbReference>
<dbReference type="HOGENOM" id="CLU_098428_0_2_10"/>
<dbReference type="OrthoDB" id="9802617at2"/>
<dbReference type="Proteomes" id="UP000000755">
    <property type="component" value="Chromosome"/>
</dbReference>
<dbReference type="GO" id="GO:1990904">
    <property type="term" value="C:ribonucleoprotein complex"/>
    <property type="evidence" value="ECO:0007669"/>
    <property type="project" value="UniProtKB-KW"/>
</dbReference>
<dbReference type="GO" id="GO:0005840">
    <property type="term" value="C:ribosome"/>
    <property type="evidence" value="ECO:0007669"/>
    <property type="project" value="UniProtKB-KW"/>
</dbReference>
<dbReference type="GO" id="GO:0019843">
    <property type="term" value="F:rRNA binding"/>
    <property type="evidence" value="ECO:0007669"/>
    <property type="project" value="UniProtKB-UniRule"/>
</dbReference>
<dbReference type="GO" id="GO:0003735">
    <property type="term" value="F:structural constituent of ribosome"/>
    <property type="evidence" value="ECO:0007669"/>
    <property type="project" value="InterPro"/>
</dbReference>
<dbReference type="GO" id="GO:0006412">
    <property type="term" value="P:translation"/>
    <property type="evidence" value="ECO:0007669"/>
    <property type="project" value="UniProtKB-UniRule"/>
</dbReference>
<dbReference type="FunFam" id="3.30.1370.30:FF:000002">
    <property type="entry name" value="30S ribosomal protein S8"/>
    <property type="match status" value="1"/>
</dbReference>
<dbReference type="FunFam" id="3.30.1490.10:FF:000001">
    <property type="entry name" value="30S ribosomal protein S8"/>
    <property type="match status" value="1"/>
</dbReference>
<dbReference type="Gene3D" id="3.30.1370.30">
    <property type="match status" value="1"/>
</dbReference>
<dbReference type="Gene3D" id="3.30.1490.10">
    <property type="match status" value="1"/>
</dbReference>
<dbReference type="HAMAP" id="MF_01302_B">
    <property type="entry name" value="Ribosomal_uS8_B"/>
    <property type="match status" value="1"/>
</dbReference>
<dbReference type="InterPro" id="IPR000630">
    <property type="entry name" value="Ribosomal_uS8"/>
</dbReference>
<dbReference type="InterPro" id="IPR047863">
    <property type="entry name" value="Ribosomal_uS8_CS"/>
</dbReference>
<dbReference type="InterPro" id="IPR035987">
    <property type="entry name" value="Ribosomal_uS8_sf"/>
</dbReference>
<dbReference type="NCBIfam" id="NF001109">
    <property type="entry name" value="PRK00136.1"/>
    <property type="match status" value="1"/>
</dbReference>
<dbReference type="PANTHER" id="PTHR11758">
    <property type="entry name" value="40S RIBOSOMAL PROTEIN S15A"/>
    <property type="match status" value="1"/>
</dbReference>
<dbReference type="Pfam" id="PF00410">
    <property type="entry name" value="Ribosomal_S8"/>
    <property type="match status" value="1"/>
</dbReference>
<dbReference type="SUPFAM" id="SSF56047">
    <property type="entry name" value="Ribosomal protein S8"/>
    <property type="match status" value="1"/>
</dbReference>
<dbReference type="PROSITE" id="PS00053">
    <property type="entry name" value="RIBOSOMAL_S8"/>
    <property type="match status" value="1"/>
</dbReference>
<keyword id="KW-0687">Ribonucleoprotein</keyword>
<keyword id="KW-0689">Ribosomal protein</keyword>
<keyword id="KW-0694">RNA-binding</keyword>
<keyword id="KW-0699">rRNA-binding</keyword>
<gene>
    <name evidence="1" type="primary">rpsH</name>
    <name type="ordered locus">GFO_2825</name>
</gene>
<protein>
    <recommendedName>
        <fullName evidence="1">Small ribosomal subunit protein uS8</fullName>
    </recommendedName>
    <alternativeName>
        <fullName evidence="2">30S ribosomal protein S8</fullName>
    </alternativeName>
</protein>
<comment type="function">
    <text evidence="1">One of the primary rRNA binding proteins, it binds directly to 16S rRNA central domain where it helps coordinate assembly of the platform of the 30S subunit.</text>
</comment>
<comment type="subunit">
    <text evidence="1">Part of the 30S ribosomal subunit. Contacts proteins S5 and S12.</text>
</comment>
<comment type="similarity">
    <text evidence="1">Belongs to the universal ribosomal protein uS8 family.</text>
</comment>
<sequence>MNTDPIADYLTRIRNANAANHRVVEIPASNVKKEITKILFDQGYILSYKFEDTTAQGTIKIALKYDKLTKEPVIKKIQRISKPGLRKYAGSTEIPRILNGLGIAVVSTSHGVMTGKQAKANKVGGEVLCYVY</sequence>
<accession>A0M584</accession>
<name>RS8_CHRFK</name>
<feature type="chain" id="PRO_0000290845" description="Small ribosomal subunit protein uS8">
    <location>
        <begin position="1"/>
        <end position="132"/>
    </location>
</feature>
<proteinExistence type="inferred from homology"/>
<organism>
    <name type="scientific">Christiangramia forsetii (strain DSM 17595 / CGMCC 1.15422 / KT0803)</name>
    <name type="common">Gramella forsetii</name>
    <dbReference type="NCBI Taxonomy" id="411154"/>
    <lineage>
        <taxon>Bacteria</taxon>
        <taxon>Pseudomonadati</taxon>
        <taxon>Bacteroidota</taxon>
        <taxon>Flavobacteriia</taxon>
        <taxon>Flavobacteriales</taxon>
        <taxon>Flavobacteriaceae</taxon>
        <taxon>Christiangramia</taxon>
    </lineage>
</organism>